<proteinExistence type="inferred from homology"/>
<feature type="chain" id="PRO_1000014621" description="Small ribosomal subunit protein bS20">
    <location>
        <begin position="1"/>
        <end position="84"/>
    </location>
</feature>
<feature type="region of interest" description="Disordered" evidence="2">
    <location>
        <begin position="1"/>
        <end position="25"/>
    </location>
</feature>
<reference key="1">
    <citation type="journal article" date="2006" name="Proc. Natl. Acad. Sci. U.S.A.">
        <title>Comparative genomics of the lactic acid bacteria.</title>
        <authorList>
            <person name="Makarova K.S."/>
            <person name="Slesarev A."/>
            <person name="Wolf Y.I."/>
            <person name="Sorokin A."/>
            <person name="Mirkin B."/>
            <person name="Koonin E.V."/>
            <person name="Pavlov A."/>
            <person name="Pavlova N."/>
            <person name="Karamychev V."/>
            <person name="Polouchine N."/>
            <person name="Shakhova V."/>
            <person name="Grigoriev I."/>
            <person name="Lou Y."/>
            <person name="Rohksar D."/>
            <person name="Lucas S."/>
            <person name="Huang K."/>
            <person name="Goodstein D.M."/>
            <person name="Hawkins T."/>
            <person name="Plengvidhya V."/>
            <person name="Welker D."/>
            <person name="Hughes J."/>
            <person name="Goh Y."/>
            <person name="Benson A."/>
            <person name="Baldwin K."/>
            <person name="Lee J.-H."/>
            <person name="Diaz-Muniz I."/>
            <person name="Dosti B."/>
            <person name="Smeianov V."/>
            <person name="Wechter W."/>
            <person name="Barabote R."/>
            <person name="Lorca G."/>
            <person name="Altermann E."/>
            <person name="Barrangou R."/>
            <person name="Ganesan B."/>
            <person name="Xie Y."/>
            <person name="Rawsthorne H."/>
            <person name="Tamir D."/>
            <person name="Parker C."/>
            <person name="Breidt F."/>
            <person name="Broadbent J.R."/>
            <person name="Hutkins R."/>
            <person name="O'Sullivan D."/>
            <person name="Steele J."/>
            <person name="Unlu G."/>
            <person name="Saier M.H. Jr."/>
            <person name="Klaenhammer T."/>
            <person name="Richardson P."/>
            <person name="Kozyavkin S."/>
            <person name="Weimer B.C."/>
            <person name="Mills D.A."/>
        </authorList>
    </citation>
    <scope>NUCLEOTIDE SEQUENCE [LARGE SCALE GENOMIC DNA]</scope>
    <source>
        <strain>ATCC 25745 / CCUG 21536 / LMG 10740 / 183-1w</strain>
    </source>
</reference>
<organism>
    <name type="scientific">Pediococcus pentosaceus (strain ATCC 25745 / CCUG 21536 / LMG 10740 / 183-1w)</name>
    <dbReference type="NCBI Taxonomy" id="278197"/>
    <lineage>
        <taxon>Bacteria</taxon>
        <taxon>Bacillati</taxon>
        <taxon>Bacillota</taxon>
        <taxon>Bacilli</taxon>
        <taxon>Lactobacillales</taxon>
        <taxon>Lactobacillaceae</taxon>
        <taxon>Pediococcus</taxon>
    </lineage>
</organism>
<accession>Q03F21</accession>
<sequence>MPVIKSAMKRVRTSEKAAARNRSQMSAMRTSIKAFEIAATNNAENANELLQTAYSRIDRAKSKGLIKANNAGRKKSRLAKMLSK</sequence>
<protein>
    <recommendedName>
        <fullName evidence="1">Small ribosomal subunit protein bS20</fullName>
    </recommendedName>
    <alternativeName>
        <fullName evidence="3">30S ribosomal protein S20</fullName>
    </alternativeName>
</protein>
<gene>
    <name evidence="1" type="primary">rpsT</name>
    <name type="ordered locus">PEPE_1147</name>
</gene>
<evidence type="ECO:0000255" key="1">
    <source>
        <dbReference type="HAMAP-Rule" id="MF_00500"/>
    </source>
</evidence>
<evidence type="ECO:0000256" key="2">
    <source>
        <dbReference type="SAM" id="MobiDB-lite"/>
    </source>
</evidence>
<evidence type="ECO:0000305" key="3"/>
<name>RS20_PEDPA</name>
<dbReference type="EMBL" id="CP000422">
    <property type="protein sequence ID" value="ABJ68201.1"/>
    <property type="molecule type" value="Genomic_DNA"/>
</dbReference>
<dbReference type="RefSeq" id="WP_002833450.1">
    <property type="nucleotide sequence ID" value="NC_008525.1"/>
</dbReference>
<dbReference type="SMR" id="Q03F21"/>
<dbReference type="STRING" id="278197.PEPE_1147"/>
<dbReference type="GeneID" id="33062391"/>
<dbReference type="KEGG" id="ppe:PEPE_1147"/>
<dbReference type="eggNOG" id="COG0268">
    <property type="taxonomic scope" value="Bacteria"/>
</dbReference>
<dbReference type="HOGENOM" id="CLU_160655_1_1_9"/>
<dbReference type="OrthoDB" id="9808392at2"/>
<dbReference type="Proteomes" id="UP000000773">
    <property type="component" value="Chromosome"/>
</dbReference>
<dbReference type="GO" id="GO:0005829">
    <property type="term" value="C:cytosol"/>
    <property type="evidence" value="ECO:0007669"/>
    <property type="project" value="TreeGrafter"/>
</dbReference>
<dbReference type="GO" id="GO:0015935">
    <property type="term" value="C:small ribosomal subunit"/>
    <property type="evidence" value="ECO:0007669"/>
    <property type="project" value="TreeGrafter"/>
</dbReference>
<dbReference type="GO" id="GO:0070181">
    <property type="term" value="F:small ribosomal subunit rRNA binding"/>
    <property type="evidence" value="ECO:0007669"/>
    <property type="project" value="TreeGrafter"/>
</dbReference>
<dbReference type="GO" id="GO:0003735">
    <property type="term" value="F:structural constituent of ribosome"/>
    <property type="evidence" value="ECO:0007669"/>
    <property type="project" value="InterPro"/>
</dbReference>
<dbReference type="GO" id="GO:0006412">
    <property type="term" value="P:translation"/>
    <property type="evidence" value="ECO:0007669"/>
    <property type="project" value="UniProtKB-UniRule"/>
</dbReference>
<dbReference type="Gene3D" id="1.20.58.110">
    <property type="entry name" value="Ribosomal protein S20"/>
    <property type="match status" value="1"/>
</dbReference>
<dbReference type="HAMAP" id="MF_00500">
    <property type="entry name" value="Ribosomal_bS20"/>
    <property type="match status" value="1"/>
</dbReference>
<dbReference type="InterPro" id="IPR002583">
    <property type="entry name" value="Ribosomal_bS20"/>
</dbReference>
<dbReference type="InterPro" id="IPR036510">
    <property type="entry name" value="Ribosomal_bS20_sf"/>
</dbReference>
<dbReference type="NCBIfam" id="TIGR00029">
    <property type="entry name" value="S20"/>
    <property type="match status" value="1"/>
</dbReference>
<dbReference type="PANTHER" id="PTHR33398">
    <property type="entry name" value="30S RIBOSOMAL PROTEIN S20"/>
    <property type="match status" value="1"/>
</dbReference>
<dbReference type="PANTHER" id="PTHR33398:SF1">
    <property type="entry name" value="SMALL RIBOSOMAL SUBUNIT PROTEIN BS20C"/>
    <property type="match status" value="1"/>
</dbReference>
<dbReference type="Pfam" id="PF01649">
    <property type="entry name" value="Ribosomal_S20p"/>
    <property type="match status" value="1"/>
</dbReference>
<dbReference type="SUPFAM" id="SSF46992">
    <property type="entry name" value="Ribosomal protein S20"/>
    <property type="match status" value="1"/>
</dbReference>
<keyword id="KW-0687">Ribonucleoprotein</keyword>
<keyword id="KW-0689">Ribosomal protein</keyword>
<keyword id="KW-0694">RNA-binding</keyword>
<keyword id="KW-0699">rRNA-binding</keyword>
<comment type="function">
    <text evidence="1">Binds directly to 16S ribosomal RNA.</text>
</comment>
<comment type="similarity">
    <text evidence="1">Belongs to the bacterial ribosomal protein bS20 family.</text>
</comment>